<keyword id="KW-0025">Alternative splicing</keyword>
<keyword id="KW-0963">Cytoplasm</keyword>
<keyword id="KW-0343">GTPase activation</keyword>
<keyword id="KW-1185">Reference proteome</keyword>
<dbReference type="EMBL" id="AB011277">
    <property type="protein sequence ID" value="BAA24957.1"/>
    <property type="molecule type" value="mRNA"/>
</dbReference>
<dbReference type="EMBL" id="AB011278">
    <property type="protein sequence ID" value="BAA24958.1"/>
    <property type="molecule type" value="mRNA"/>
</dbReference>
<dbReference type="EMBL" id="AB011279">
    <property type="protein sequence ID" value="BAA24959.1"/>
    <property type="molecule type" value="mRNA"/>
</dbReference>
<dbReference type="EMBL" id="AB011280">
    <property type="protein sequence ID" value="BAA24960.1"/>
    <property type="status" value="ALT_FRAME"/>
    <property type="molecule type" value="mRNA"/>
</dbReference>
<dbReference type="EMBL" id="AB011281">
    <property type="protein sequence ID" value="BAA24961.1"/>
    <property type="molecule type" value="mRNA"/>
</dbReference>
<dbReference type="EMBL" id="AB011282">
    <property type="protein sequence ID" value="BAA24962.1"/>
    <property type="status" value="ALT_INIT"/>
    <property type="molecule type" value="mRNA"/>
</dbReference>
<dbReference type="EMBL" id="AB011283">
    <property type="protein sequence ID" value="BAA24963.1"/>
    <property type="molecule type" value="mRNA"/>
</dbReference>
<dbReference type="EMBL" id="AB011284">
    <property type="protein sequence ID" value="BAA24964.1"/>
    <property type="status" value="ALT_INIT"/>
    <property type="molecule type" value="mRNA"/>
</dbReference>
<dbReference type="EMBL" id="AB011285">
    <property type="protein sequence ID" value="BAA24965.1"/>
    <property type="molecule type" value="mRNA"/>
</dbReference>
<dbReference type="EMBL" id="Z37140">
    <property type="protein sequence ID" value="CAA85503.1"/>
    <property type="molecule type" value="Genomic_DNA"/>
</dbReference>
<dbReference type="EMBL" id="Z37979">
    <property type="protein sequence ID" value="CAA85503.1"/>
    <property type="status" value="JOINED"/>
    <property type="molecule type" value="Genomic_DNA"/>
</dbReference>
<dbReference type="EMBL" id="Z46266">
    <property type="protein sequence ID" value="CAA85503.1"/>
    <property type="status" value="JOINED"/>
    <property type="molecule type" value="Genomic_DNA"/>
</dbReference>
<dbReference type="EMBL" id="Z46266">
    <property type="protein sequence ID" value="CAA86414.2"/>
    <property type="molecule type" value="Genomic_DNA"/>
</dbReference>
<dbReference type="EMBL" id="BX284606">
    <property type="protein sequence ID" value="CAJ30221.1"/>
    <property type="molecule type" value="Genomic_DNA"/>
</dbReference>
<dbReference type="EMBL" id="BX284606">
    <property type="protein sequence ID" value="CAO78710.1"/>
    <property type="molecule type" value="Genomic_DNA"/>
</dbReference>
<dbReference type="EMBL" id="BX284606">
    <property type="protein sequence ID" value="CCO25886.1"/>
    <property type="molecule type" value="Genomic_DNA"/>
</dbReference>
<dbReference type="EMBL" id="BX284606">
    <property type="protein sequence ID" value="CCO25887.1"/>
    <property type="molecule type" value="Genomic_DNA"/>
</dbReference>
<dbReference type="EMBL" id="BX284606">
    <property type="protein sequence ID" value="CCO25888.1"/>
    <property type="molecule type" value="Genomic_DNA"/>
</dbReference>
<dbReference type="EMBL" id="BX284606">
    <property type="protein sequence ID" value="CCO25889.1"/>
    <property type="molecule type" value="Genomic_DNA"/>
</dbReference>
<dbReference type="EMBL" id="BX284606">
    <property type="protein sequence ID" value="CCO25890.1"/>
    <property type="molecule type" value="Genomic_DNA"/>
</dbReference>
<dbReference type="EMBL" id="BX284606">
    <property type="protein sequence ID" value="CCO25891.1"/>
    <property type="molecule type" value="Genomic_DNA"/>
</dbReference>
<dbReference type="EMBL" id="BX284606">
    <property type="protein sequence ID" value="CCU83306.1"/>
    <property type="molecule type" value="Genomic_DNA"/>
</dbReference>
<dbReference type="EMBL" id="BX284606">
    <property type="protein sequence ID" value="CCU83365.1"/>
    <property type="molecule type" value="Genomic_DNA"/>
</dbReference>
<dbReference type="PIR" id="D89610">
    <property type="entry name" value="D89610"/>
</dbReference>
<dbReference type="PIR" id="T19040">
    <property type="entry name" value="T19040"/>
</dbReference>
<dbReference type="PIR" id="T19041">
    <property type="entry name" value="T19041"/>
</dbReference>
<dbReference type="PIR" id="T19042">
    <property type="entry name" value="T19042"/>
</dbReference>
<dbReference type="PIR" id="T19043">
    <property type="entry name" value="T19043"/>
</dbReference>
<dbReference type="PIR" id="T19045">
    <property type="entry name" value="T19045"/>
</dbReference>
<dbReference type="PIR" id="T19046">
    <property type="entry name" value="T19046"/>
</dbReference>
<dbReference type="PIR" id="T37279">
    <property type="entry name" value="T37279"/>
</dbReference>
<dbReference type="PIR" id="T37300">
    <property type="entry name" value="T37300"/>
</dbReference>
<dbReference type="PIR" id="T37302">
    <property type="entry name" value="T37302"/>
</dbReference>
<dbReference type="PIR" id="T37304">
    <property type="entry name" value="T37304"/>
</dbReference>
<dbReference type="RefSeq" id="NP_001033580.1">
    <property type="nucleotide sequence ID" value="NM_001038491.3"/>
</dbReference>
<dbReference type="RefSeq" id="NP_001123198.1">
    <molecule id="Q8MLZ5-10"/>
    <property type="nucleotide sequence ID" value="NM_001129726.4"/>
</dbReference>
<dbReference type="RefSeq" id="NP_001294843.1">
    <molecule id="Q8MLZ5-12"/>
    <property type="nucleotide sequence ID" value="NM_001307914.4"/>
</dbReference>
<dbReference type="RefSeq" id="NP_001294845.1">
    <molecule id="Q8MLZ5-11"/>
    <property type="nucleotide sequence ID" value="NM_001307916.4"/>
</dbReference>
<dbReference type="RefSeq" id="NP_001379449.1">
    <molecule id="Q8MLZ5-9"/>
    <property type="nucleotide sequence ID" value="NM_001392821.1"/>
</dbReference>
<dbReference type="RefSeq" id="NP_509594.3">
    <molecule id="Q8MLZ5-1"/>
    <property type="nucleotide sequence ID" value="NM_077193.4"/>
</dbReference>
<dbReference type="RefSeq" id="NP_509595.1">
    <molecule id="Q8MLZ5-2"/>
    <property type="nucleotide sequence ID" value="NM_077194.8"/>
</dbReference>
<dbReference type="RefSeq" id="NP_509596.1">
    <molecule id="Q8MLZ5-3"/>
    <property type="nucleotide sequence ID" value="NM_077195.8"/>
</dbReference>
<dbReference type="RefSeq" id="NP_509597.1">
    <molecule id="Q8MLZ5-4"/>
    <property type="nucleotide sequence ID" value="NM_077196.6"/>
</dbReference>
<dbReference type="RefSeq" id="NP_509598.1">
    <molecule id="Q8MLZ5-5"/>
    <property type="nucleotide sequence ID" value="NM_077197.6"/>
</dbReference>
<dbReference type="RefSeq" id="NP_509599.1">
    <molecule id="Q8MLZ5-6"/>
    <property type="nucleotide sequence ID" value="NM_077198.7"/>
</dbReference>
<dbReference type="RefSeq" id="NP_741873.1">
    <molecule id="Q8MLZ5-8"/>
    <property type="nucleotide sequence ID" value="NM_171753.7"/>
</dbReference>
<dbReference type="RefSeq" id="NP_741874.1">
    <molecule id="Q8MLZ5-7"/>
    <property type="nucleotide sequence ID" value="NM_171754.7"/>
</dbReference>
<dbReference type="SMR" id="Q8MLZ5"/>
<dbReference type="BioGRID" id="46088">
    <property type="interactions" value="3"/>
</dbReference>
<dbReference type="FunCoup" id="Q8MLZ5">
    <property type="interactions" value="907"/>
</dbReference>
<dbReference type="IntAct" id="Q8MLZ5">
    <property type="interactions" value="1"/>
</dbReference>
<dbReference type="STRING" id="6239.ZK899.8c.1"/>
<dbReference type="PaxDb" id="6239-ZK899.8c"/>
<dbReference type="PeptideAtlas" id="Q8MLZ5"/>
<dbReference type="EnsemblMetazoa" id="ZK899.8a.1">
    <molecule id="Q8MLZ5-1"/>
    <property type="protein sequence ID" value="ZK899.8a.1"/>
    <property type="gene ID" value="WBGene00001516"/>
</dbReference>
<dbReference type="EnsemblMetazoa" id="ZK899.8b.1">
    <molecule id="Q8MLZ5-2"/>
    <property type="protein sequence ID" value="ZK899.8b.1"/>
    <property type="gene ID" value="WBGene00001516"/>
</dbReference>
<dbReference type="EnsemblMetazoa" id="ZK899.8c.1">
    <molecule id="Q8MLZ5-3"/>
    <property type="protein sequence ID" value="ZK899.8c.1"/>
    <property type="gene ID" value="WBGene00001516"/>
</dbReference>
<dbReference type="EnsemblMetazoa" id="ZK899.8d.1">
    <molecule id="Q8MLZ5-4"/>
    <property type="protein sequence ID" value="ZK899.8d.1"/>
    <property type="gene ID" value="WBGene00001516"/>
</dbReference>
<dbReference type="EnsemblMetazoa" id="ZK899.8e.1">
    <molecule id="Q8MLZ5-5"/>
    <property type="protein sequence ID" value="ZK899.8e.1"/>
    <property type="gene ID" value="WBGene00001516"/>
</dbReference>
<dbReference type="EnsemblMetazoa" id="ZK899.8f.1">
    <molecule id="Q8MLZ5-6"/>
    <property type="protein sequence ID" value="ZK899.8f.1"/>
    <property type="gene ID" value="WBGene00001516"/>
</dbReference>
<dbReference type="EnsemblMetazoa" id="ZK899.8g.1">
    <molecule id="Q8MLZ5-7"/>
    <property type="protein sequence ID" value="ZK899.8g.1"/>
    <property type="gene ID" value="WBGene00001516"/>
</dbReference>
<dbReference type="EnsemblMetazoa" id="ZK899.8h.1">
    <molecule id="Q8MLZ5-8"/>
    <property type="protein sequence ID" value="ZK899.8h.1"/>
    <property type="gene ID" value="WBGene00001516"/>
</dbReference>
<dbReference type="EnsemblMetazoa" id="ZK899.8i.1">
    <molecule id="Q8MLZ5-9"/>
    <property type="protein sequence ID" value="ZK899.8i.1"/>
    <property type="gene ID" value="WBGene00001516"/>
</dbReference>
<dbReference type="EnsemblMetazoa" id="ZK899.8i.2">
    <molecule id="Q8MLZ5-9"/>
    <property type="protein sequence ID" value="ZK899.8i.2"/>
    <property type="gene ID" value="WBGene00001516"/>
</dbReference>
<dbReference type="EnsemblMetazoa" id="ZK899.8i.3">
    <molecule id="Q8MLZ5-9"/>
    <property type="protein sequence ID" value="ZK899.8i.3"/>
    <property type="gene ID" value="WBGene00001516"/>
</dbReference>
<dbReference type="EnsemblMetazoa" id="ZK899.8i.4">
    <molecule id="Q8MLZ5-9"/>
    <property type="protein sequence ID" value="ZK899.8i.4"/>
    <property type="gene ID" value="WBGene00001516"/>
</dbReference>
<dbReference type="EnsemblMetazoa" id="ZK899.8i.5">
    <molecule id="Q8MLZ5-9"/>
    <property type="protein sequence ID" value="ZK899.8i.5"/>
    <property type="gene ID" value="WBGene00001516"/>
</dbReference>
<dbReference type="EnsemblMetazoa" id="ZK899.8j.1">
    <molecule id="Q8MLZ5-10"/>
    <property type="protein sequence ID" value="ZK899.8j.1"/>
    <property type="gene ID" value="WBGene00001516"/>
</dbReference>
<dbReference type="EnsemblMetazoa" id="ZK899.8k.1">
    <molecule id="Q8MLZ5-11"/>
    <property type="protein sequence ID" value="ZK899.8k.1"/>
    <property type="gene ID" value="WBGene00001516"/>
</dbReference>
<dbReference type="EnsemblMetazoa" id="ZK899.8l.1">
    <molecule id="Q8MLZ5-12"/>
    <property type="protein sequence ID" value="ZK899.8l.1"/>
    <property type="gene ID" value="WBGene00001516"/>
</dbReference>
<dbReference type="GeneID" id="181172"/>
<dbReference type="KEGG" id="cel:CELE_ZK899.8"/>
<dbReference type="UCSC" id="ZK899.8a">
    <property type="organism name" value="c. elegans"/>
</dbReference>
<dbReference type="AGR" id="WB:WBGene00001516"/>
<dbReference type="CTD" id="181172"/>
<dbReference type="WormBase" id="ZK899.8a">
    <molecule id="Q8MLZ5-1"/>
    <property type="protein sequence ID" value="CE23470"/>
    <property type="gene ID" value="WBGene00001516"/>
    <property type="gene designation" value="gap-2"/>
</dbReference>
<dbReference type="WormBase" id="ZK899.8b">
    <molecule id="Q8MLZ5-2"/>
    <property type="protein sequence ID" value="CE23471"/>
    <property type="gene ID" value="WBGene00001516"/>
    <property type="gene designation" value="gap-2"/>
</dbReference>
<dbReference type="WormBase" id="ZK899.8c">
    <molecule id="Q8MLZ5-3"/>
    <property type="protein sequence ID" value="CE23472"/>
    <property type="gene ID" value="WBGene00001516"/>
    <property type="gene designation" value="gap-2"/>
</dbReference>
<dbReference type="WormBase" id="ZK899.8d">
    <molecule id="Q8MLZ5-4"/>
    <property type="protein sequence ID" value="CE23473"/>
    <property type="gene ID" value="WBGene00001516"/>
    <property type="gene designation" value="gap-2"/>
</dbReference>
<dbReference type="WormBase" id="ZK899.8e">
    <molecule id="Q8MLZ5-5"/>
    <property type="protein sequence ID" value="CE23474"/>
    <property type="gene ID" value="WBGene00001516"/>
    <property type="gene designation" value="gap-2"/>
</dbReference>
<dbReference type="WormBase" id="ZK899.8f">
    <molecule id="Q8MLZ5-6"/>
    <property type="protein sequence ID" value="CE23475"/>
    <property type="gene ID" value="WBGene00001516"/>
    <property type="gene designation" value="gap-2"/>
</dbReference>
<dbReference type="WormBase" id="ZK899.8g">
    <molecule id="Q8MLZ5-7"/>
    <property type="protein sequence ID" value="CE28277"/>
    <property type="gene ID" value="WBGene00001516"/>
    <property type="gene designation" value="gap-2"/>
</dbReference>
<dbReference type="WormBase" id="ZK899.8h">
    <molecule id="Q8MLZ5-8"/>
    <property type="protein sequence ID" value="CE31677"/>
    <property type="gene ID" value="WBGene00001516"/>
    <property type="gene designation" value="gap-2"/>
</dbReference>
<dbReference type="WormBase" id="ZK899.8i">
    <molecule id="Q8MLZ5-9"/>
    <property type="protein sequence ID" value="CE39119"/>
    <property type="gene ID" value="WBGene00001516"/>
    <property type="gene designation" value="gap-2"/>
</dbReference>
<dbReference type="WormBase" id="ZK899.8j">
    <molecule id="Q8MLZ5-10"/>
    <property type="protein sequence ID" value="CE23476"/>
    <property type="gene ID" value="WBGene00001516"/>
    <property type="gene designation" value="gap-2"/>
</dbReference>
<dbReference type="WormBase" id="ZK899.8k">
    <molecule id="Q8MLZ5-11"/>
    <property type="protein sequence ID" value="CE48260"/>
    <property type="gene ID" value="WBGene00001516"/>
    <property type="gene designation" value="gap-2"/>
</dbReference>
<dbReference type="WormBase" id="ZK899.8l">
    <molecule id="Q8MLZ5-12"/>
    <property type="protein sequence ID" value="CE48295"/>
    <property type="gene ID" value="WBGene00001516"/>
    <property type="gene designation" value="gap-2"/>
</dbReference>
<dbReference type="eggNOG" id="KOG3508">
    <property type="taxonomic scope" value="Eukaryota"/>
</dbReference>
<dbReference type="GeneTree" id="ENSGT00940000172132"/>
<dbReference type="InParanoid" id="Q8MLZ5"/>
<dbReference type="OMA" id="YSPRHVH"/>
<dbReference type="OrthoDB" id="5572587at2759"/>
<dbReference type="PhylomeDB" id="Q8MLZ5"/>
<dbReference type="SignaLink" id="Q8MLZ5"/>
<dbReference type="PRO" id="PR:Q8MLZ5"/>
<dbReference type="Proteomes" id="UP000001940">
    <property type="component" value="Chromosome X"/>
</dbReference>
<dbReference type="Bgee" id="WBGene00001516">
    <property type="expression patterns" value="Expressed in pharyngeal muscle cell (C elegans) and 7 other cell types or tissues"/>
</dbReference>
<dbReference type="GO" id="GO:0005737">
    <property type="term" value="C:cytoplasm"/>
    <property type="evidence" value="ECO:0000303"/>
    <property type="project" value="UniProtKB"/>
</dbReference>
<dbReference type="GO" id="GO:0005096">
    <property type="term" value="F:GTPase activator activity"/>
    <property type="evidence" value="ECO:0000303"/>
    <property type="project" value="UniProtKB"/>
</dbReference>
<dbReference type="GO" id="GO:0008306">
    <property type="term" value="P:associative learning"/>
    <property type="evidence" value="ECO:0000316"/>
    <property type="project" value="WormBase"/>
</dbReference>
<dbReference type="GO" id="GO:0007616">
    <property type="term" value="P:long-term memory"/>
    <property type="evidence" value="ECO:0000315"/>
    <property type="project" value="WormBase"/>
</dbReference>
<dbReference type="GO" id="GO:0046580">
    <property type="term" value="P:negative regulation of Ras protein signal transduction"/>
    <property type="evidence" value="ECO:0000270"/>
    <property type="project" value="UniProtKB"/>
</dbReference>
<dbReference type="GO" id="GO:0007614">
    <property type="term" value="P:short-term memory"/>
    <property type="evidence" value="ECO:0000315"/>
    <property type="project" value="WormBase"/>
</dbReference>
<dbReference type="CDD" id="cd04013">
    <property type="entry name" value="C2_SynGAP_like"/>
    <property type="match status" value="1"/>
</dbReference>
<dbReference type="CDD" id="cd05136">
    <property type="entry name" value="RasGAP_DAB2IP"/>
    <property type="match status" value="1"/>
</dbReference>
<dbReference type="Gene3D" id="2.60.40.150">
    <property type="entry name" value="C2 domain"/>
    <property type="match status" value="1"/>
</dbReference>
<dbReference type="Gene3D" id="1.10.506.10">
    <property type="entry name" value="GTPase Activation - p120gap, domain 1"/>
    <property type="match status" value="2"/>
</dbReference>
<dbReference type="InterPro" id="IPR000008">
    <property type="entry name" value="C2_dom"/>
</dbReference>
<dbReference type="InterPro" id="IPR035892">
    <property type="entry name" value="C2_domain_sf"/>
</dbReference>
<dbReference type="InterPro" id="IPR001849">
    <property type="entry name" value="PH_domain"/>
</dbReference>
<dbReference type="InterPro" id="IPR039360">
    <property type="entry name" value="Ras_GTPase"/>
</dbReference>
<dbReference type="InterPro" id="IPR023152">
    <property type="entry name" value="RasGAP_CS"/>
</dbReference>
<dbReference type="InterPro" id="IPR001936">
    <property type="entry name" value="RasGAP_dom"/>
</dbReference>
<dbReference type="InterPro" id="IPR008936">
    <property type="entry name" value="Rho_GTPase_activation_prot"/>
</dbReference>
<dbReference type="PANTHER" id="PTHR10194:SF60">
    <property type="entry name" value="RAS GTPASE-ACTIVATING PROTEIN RASKOL"/>
    <property type="match status" value="1"/>
</dbReference>
<dbReference type="PANTHER" id="PTHR10194">
    <property type="entry name" value="RAS GTPASE-ACTIVATING PROTEINS"/>
    <property type="match status" value="1"/>
</dbReference>
<dbReference type="Pfam" id="PF00168">
    <property type="entry name" value="C2"/>
    <property type="match status" value="1"/>
</dbReference>
<dbReference type="Pfam" id="PF25321">
    <property type="entry name" value="PH_RASGAP"/>
    <property type="match status" value="1"/>
</dbReference>
<dbReference type="Pfam" id="PF00616">
    <property type="entry name" value="RasGAP"/>
    <property type="match status" value="1"/>
</dbReference>
<dbReference type="SMART" id="SM00239">
    <property type="entry name" value="C2"/>
    <property type="match status" value="1"/>
</dbReference>
<dbReference type="SMART" id="SM00233">
    <property type="entry name" value="PH"/>
    <property type="match status" value="1"/>
</dbReference>
<dbReference type="SMART" id="SM00323">
    <property type="entry name" value="RasGAP"/>
    <property type="match status" value="1"/>
</dbReference>
<dbReference type="SUPFAM" id="SSF49562">
    <property type="entry name" value="C2 domain (Calcium/lipid-binding domain, CaLB)"/>
    <property type="match status" value="1"/>
</dbReference>
<dbReference type="SUPFAM" id="SSF48350">
    <property type="entry name" value="GTPase activation domain, GAP"/>
    <property type="match status" value="1"/>
</dbReference>
<dbReference type="PROSITE" id="PS50004">
    <property type="entry name" value="C2"/>
    <property type="match status" value="1"/>
</dbReference>
<dbReference type="PROSITE" id="PS00509">
    <property type="entry name" value="RAS_GTPASE_ACTIV_1"/>
    <property type="match status" value="1"/>
</dbReference>
<dbReference type="PROSITE" id="PS50018">
    <property type="entry name" value="RAS_GTPASE_ACTIV_2"/>
    <property type="match status" value="1"/>
</dbReference>
<gene>
    <name type="primary">gap-2</name>
    <name type="ORF">ZK899.8</name>
</gene>
<name>GAP2_CAEEL</name>
<evidence type="ECO:0000250" key="1"/>
<evidence type="ECO:0000255" key="2">
    <source>
        <dbReference type="PROSITE-ProRule" id="PRU00041"/>
    </source>
</evidence>
<evidence type="ECO:0000255" key="3">
    <source>
        <dbReference type="PROSITE-ProRule" id="PRU00167"/>
    </source>
</evidence>
<evidence type="ECO:0000256" key="4">
    <source>
        <dbReference type="SAM" id="MobiDB-lite"/>
    </source>
</evidence>
<evidence type="ECO:0000269" key="5">
    <source>
    </source>
</evidence>
<evidence type="ECO:0000303" key="6">
    <source>
    </source>
</evidence>
<evidence type="ECO:0000305" key="7"/>
<evidence type="ECO:0000312" key="8">
    <source>
        <dbReference type="WormBase" id="ZK899.8a"/>
    </source>
</evidence>
<evidence type="ECO:0000312" key="9">
    <source>
        <dbReference type="WormBase" id="ZK899.8b"/>
    </source>
</evidence>
<evidence type="ECO:0000312" key="10">
    <source>
        <dbReference type="WormBase" id="ZK899.8c"/>
    </source>
</evidence>
<evidence type="ECO:0000312" key="11">
    <source>
        <dbReference type="WormBase" id="ZK899.8d"/>
    </source>
</evidence>
<evidence type="ECO:0000312" key="12">
    <source>
        <dbReference type="WormBase" id="ZK899.8e"/>
    </source>
</evidence>
<evidence type="ECO:0000312" key="13">
    <source>
        <dbReference type="WormBase" id="ZK899.8f"/>
    </source>
</evidence>
<evidence type="ECO:0000312" key="14">
    <source>
        <dbReference type="WormBase" id="ZK899.8i"/>
    </source>
</evidence>
<evidence type="ECO:0000312" key="15">
    <source>
        <dbReference type="WormBase" id="ZK899.8j"/>
    </source>
</evidence>
<evidence type="ECO:0000312" key="16">
    <source>
        <dbReference type="WormBase" id="ZK899.8k"/>
    </source>
</evidence>
<evidence type="ECO:0000312" key="17">
    <source>
        <dbReference type="WormBase" id="ZK899.8l"/>
    </source>
</evidence>
<organism>
    <name type="scientific">Caenorhabditis elegans</name>
    <dbReference type="NCBI Taxonomy" id="6239"/>
    <lineage>
        <taxon>Eukaryota</taxon>
        <taxon>Metazoa</taxon>
        <taxon>Ecdysozoa</taxon>
        <taxon>Nematoda</taxon>
        <taxon>Chromadorea</taxon>
        <taxon>Rhabditida</taxon>
        <taxon>Rhabditina</taxon>
        <taxon>Rhabditomorpha</taxon>
        <taxon>Rhabditoidea</taxon>
        <taxon>Rhabditidae</taxon>
        <taxon>Peloderinae</taxon>
        <taxon>Caenorhabditis</taxon>
    </lineage>
</organism>
<protein>
    <recommendedName>
        <fullName>Ras GTPase-activating protein gap-2</fullName>
        <shortName>GTPase-activating protein 2</shortName>
    </recommendedName>
</protein>
<comment type="function">
    <text evidence="5">GTPase-activating protein, which acts as a negative regulator for the member of the Ras family let-60. Probably decreases the signaling activity of Ras by stimulating its intrinsic GTPase activity, thereby lowering the levels of GTP-bound, active Ras. The different isoforms may play a distinct role in specific tissues.</text>
</comment>
<comment type="subcellular location">
    <subcellularLocation>
        <location evidence="1">Cytoplasm</location>
    </subcellularLocation>
</comment>
<comment type="alternative products">
    <event type="alternative splicing"/>
    <isoform>
        <id>Q8MLZ5-1</id>
        <name evidence="8">a</name>
        <name evidence="6">GAP-2-1</name>
        <sequence type="displayed"/>
    </isoform>
    <isoform>
        <id>Q8MLZ5-2</id>
        <name evidence="9">b</name>
        <name evidence="6">GAP-2-2</name>
        <sequence type="described" ref="VSP_007788 VSP_007789"/>
    </isoform>
    <isoform>
        <id>Q8MLZ5-3</id>
        <name evidence="10">c</name>
        <name evidence="6">GAP-2-3</name>
        <sequence type="described" ref="VSP_007790 VSP_007789"/>
    </isoform>
    <isoform>
        <id>Q8MLZ5-4</id>
        <name evidence="11">d</name>
        <name evidence="6">GAP-2-4</name>
        <sequence type="described" ref="VSP_007791 VSP_007792 VSP_007789"/>
    </isoform>
    <isoform>
        <id>Q8MLZ5-5</id>
        <name evidence="12">e</name>
        <name evidence="6">GAP-2-5</name>
        <sequence type="described" ref="VSP_007793 VSP_007794"/>
    </isoform>
    <isoform>
        <id>Q8MLZ5-6</id>
        <name evidence="13">f</name>
        <name evidence="6">GAP-2-7</name>
        <sequence type="described" ref="VSP_007795 VSP_007796"/>
    </isoform>
    <isoform>
        <id>Q8MLZ5-7</id>
        <name evidence="12">g</name>
        <name evidence="6">GAP-2-9</name>
        <sequence type="described" ref="VSP_007797 VSP_007798"/>
    </isoform>
    <isoform>
        <id>Q8MLZ5-8</id>
        <name>h</name>
        <sequence type="described" ref="VSP_007799 VSP_007800 VSP_007789"/>
    </isoform>
    <isoform>
        <id>Q8MLZ5-9</id>
        <name evidence="14">i</name>
        <sequence type="described" ref="VSP_058284"/>
    </isoform>
    <isoform>
        <id>Q8MLZ5-10</id>
        <name evidence="15">j</name>
        <sequence type="described" ref="VSP_058283"/>
    </isoform>
    <isoform>
        <id>Q8MLZ5-11</id>
        <name evidence="16">k</name>
        <sequence type="described" ref="VSP_058286"/>
    </isoform>
    <isoform>
        <id>Q8MLZ5-12</id>
        <name evidence="17">l</name>
        <sequence type="described" ref="VSP_058285"/>
    </isoform>
</comment>
<comment type="tissue specificity">
    <text evidence="5">Mainly expressed in gonads and vulval cells. Isoform c in expressed in pharyngeal epithelial cells and several rectal/blast cells in the tail region. Isoform f is weakly expressed in four cells symmetrically located in the vulval region. Isoform g is strongly expressed in the pharyngeal muscle cells m6 in addition to several cells in the tail region.</text>
</comment>
<comment type="sequence caution" evidence="7">
    <conflict type="frameshift">
        <sequence resource="EMBL-CDS" id="BAA24960"/>
    </conflict>
</comment>
<comment type="sequence caution" evidence="7">
    <conflict type="erroneous initiation">
        <sequence resource="EMBL-CDS" id="BAA24962"/>
    </conflict>
    <text>Truncated N-terminus.</text>
</comment>
<comment type="sequence caution" evidence="7">
    <conflict type="erroneous initiation">
        <sequence resource="EMBL-CDS" id="BAA24964"/>
    </conflict>
    <text>Truncated N-terminus.</text>
</comment>
<feature type="chain" id="PRO_0000056664" description="Ras GTPase-activating protein gap-2">
    <location>
        <begin position="1"/>
        <end position="1207"/>
    </location>
</feature>
<feature type="domain" description="PH">
    <location>
        <begin position="40"/>
        <end position="383"/>
    </location>
</feature>
<feature type="domain" description="C2" evidence="2">
    <location>
        <begin position="374"/>
        <end position="490"/>
    </location>
</feature>
<feature type="domain" description="Ras-GAP" evidence="3">
    <location>
        <begin position="579"/>
        <end position="789"/>
    </location>
</feature>
<feature type="region of interest" description="Disordered" evidence="4">
    <location>
        <begin position="1"/>
        <end position="29"/>
    </location>
</feature>
<feature type="region of interest" description="Disordered" evidence="4">
    <location>
        <begin position="221"/>
        <end position="316"/>
    </location>
</feature>
<feature type="region of interest" description="Disordered" evidence="4">
    <location>
        <begin position="495"/>
        <end position="516"/>
    </location>
</feature>
<feature type="region of interest" description="Disordered" evidence="4">
    <location>
        <begin position="856"/>
        <end position="903"/>
    </location>
</feature>
<feature type="region of interest" description="Disordered" evidence="4">
    <location>
        <begin position="923"/>
        <end position="1013"/>
    </location>
</feature>
<feature type="region of interest" description="Disordered" evidence="4">
    <location>
        <begin position="1086"/>
        <end position="1107"/>
    </location>
</feature>
<feature type="region of interest" description="Disordered" evidence="4">
    <location>
        <begin position="1163"/>
        <end position="1207"/>
    </location>
</feature>
<feature type="compositionally biased region" description="Low complexity" evidence="4">
    <location>
        <begin position="223"/>
        <end position="236"/>
    </location>
</feature>
<feature type="compositionally biased region" description="Polar residues" evidence="4">
    <location>
        <begin position="237"/>
        <end position="247"/>
    </location>
</feature>
<feature type="compositionally biased region" description="Polar residues" evidence="4">
    <location>
        <begin position="286"/>
        <end position="297"/>
    </location>
</feature>
<feature type="compositionally biased region" description="Polar residues" evidence="4">
    <location>
        <begin position="495"/>
        <end position="504"/>
    </location>
</feature>
<feature type="compositionally biased region" description="Polar residues" evidence="4">
    <location>
        <begin position="862"/>
        <end position="876"/>
    </location>
</feature>
<feature type="compositionally biased region" description="Polar residues" evidence="4">
    <location>
        <begin position="891"/>
        <end position="903"/>
    </location>
</feature>
<feature type="compositionally biased region" description="Low complexity" evidence="4">
    <location>
        <begin position="939"/>
        <end position="953"/>
    </location>
</feature>
<feature type="compositionally biased region" description="Basic and acidic residues" evidence="4">
    <location>
        <begin position="955"/>
        <end position="972"/>
    </location>
</feature>
<feature type="compositionally biased region" description="Low complexity" evidence="4">
    <location>
        <begin position="985"/>
        <end position="1013"/>
    </location>
</feature>
<feature type="compositionally biased region" description="Low complexity" evidence="4">
    <location>
        <begin position="1181"/>
        <end position="1207"/>
    </location>
</feature>
<feature type="site" description="Arginine finger; crucial for GTP hydrolysis by stabilizing the transition state" evidence="3">
    <location>
        <position position="604"/>
    </location>
</feature>
<feature type="splice variant" id="VSP_058283" description="In isoform j." evidence="7">
    <original>MKVIDEKPEDEEEEKDSGSKCKTPSSCTKKRVREKEEDLPPICHGWLIVCEGNPTKMMNKEVKLPWHAGYCVFEPRQSTMSCYKQEYPFIAGRMLHRNRTVRMDGDRSAFARHWGLLPEHYPSPPITGPHTIARSYTRPPKDRLPTKERFFSISRIPSRLTKFSTVRGMSIEFFDAIHDETNSGGAQVGGESLDRRGWSGASTGNRTTLTASVHNNLMNGRMSSSSHNLSTRLSGSTQNLNQPTNAYGNLLSRPFRSNPLKRTKSVSKMEKSLAEANQHSLHRVDASNTPSRDSSLYAQPPARRHLSQPAREGSLRACRSHESLLSSAHSTHMIELNEDNRLHPVHPSIFEVPNCFRLASTYYSCRTPLERAKWMENLRKTMNPRRDQQRRTENSMLIWILEAKGLPAKRKYYCEMTLDKTLYAKTSSKARTDNVFWGENFEFMMLPKIDEVCVSLFRESDSKKKKDTLIGYVTIGIDQLSSRSPVERW</original>
    <variation>MRGEYDPWDPSFHNSSMIPYSLASIYPSIENLPEEFSNENNKIKNVLKNFIWSFKLKKNYVRVSSLFGEYCR</variation>
    <location>
        <begin position="1"/>
        <end position="489"/>
    </location>
</feature>
<feature type="splice variant" id="VSP_007797" description="In isoform g." evidence="7">
    <location>
        <begin position="1"/>
        <end position="420"/>
    </location>
</feature>
<feature type="splice variant" id="VSP_058284" description="In isoform i.">
    <location>
        <begin position="1"/>
        <end position="381"/>
    </location>
</feature>
<feature type="splice variant" id="VSP_058285" description="In isoform l." evidence="7">
    <original>MKVIDEKPEDEEEEKDSGSKCKTPSSCTKKRVREKEEDLPPICHGWLIVCEGNPTKMMNKEVKLPWHAGYCVFEPRQSTMSCYKQEYPFIAGRMLHRNRTVRMDGDRSAFARHWGLLPEHYPSPPITGPHTIARSYTRPPKDRLPTKERFFSISRIPSRLTKFSTVRGMSIEFFDAIHDETNSGGAQVGGESLDRRGWSGASTGNRTTLTASVHNNLMNGRMSSSSHNLSTRLSGSTQNLNQPTNAYGNLLSRPFRSNPLKRTKSVSKMEKSLAEANQH</original>
    <variation>MKHMFSIRSSSYTVNIPNQP</variation>
    <location>
        <begin position="1"/>
        <end position="279"/>
    </location>
</feature>
<feature type="splice variant" id="VSP_007795" description="In isoform f." evidence="7">
    <location>
        <begin position="1"/>
        <end position="251"/>
    </location>
</feature>
<feature type="splice variant" id="VSP_007790" description="In isoform c." evidence="7">
    <original>MKVIDEKPEDEEEEKDSGSKCKTPSSCTKKRVREKEEDLPPICHGWLIVCEGNPTKMMNKEVKLPWHAGYCVFEPRQSTMSCYKQEYPFIAGRMLHRNRTVRMDGDRSAFARHWGLLPEHYPSPPITGPHTIARSYTRPPKDRLPTKERFFSISRIPSRLTKFSTVRGMSIEFF</original>
    <variation>MHRQGVHPNALHHLLLANKKRSNTTTCAHSTSSTPRSTYSSGSATSSLPLYVNTHAVTEQPKAEKRVSFKDLDMSGRLPVTAQQPSSSSNHLRTGGGLHARKLHRCDTGNMSLLERYLSRENMHTPSPIPQEYQPQANYSSRHVHFAQSQSRRPFQRDQRNENASIRKRLSRSCDHLSDHNFSPRLPPIRRKPTKHVPSTLSLVIH</variation>
    <location>
        <begin position="1"/>
        <end position="174"/>
    </location>
</feature>
<feature type="splice variant" id="VSP_007793" description="In isoform e." evidence="7">
    <location>
        <begin position="1"/>
        <end position="159"/>
    </location>
</feature>
<feature type="splice variant" id="VSP_007799" description="In isoform h." evidence="7">
    <location>
        <begin position="1"/>
        <end position="119"/>
    </location>
</feature>
<feature type="splice variant" id="VSP_007791" description="In isoform d." evidence="6">
    <location>
        <begin position="1"/>
        <end position="90"/>
    </location>
</feature>
<feature type="splice variant" id="VSP_007788" description="In isoform b." evidence="7">
    <location>
        <begin position="1"/>
        <end position="57"/>
    </location>
</feature>
<feature type="splice variant" id="VSP_007792" description="In isoform d." evidence="6">
    <original>AGRMLHRNRTVRMDGDRSAFARHWGLLPEHYPSPPITGPHTIARSYTRPPKDRLPTKERFFSISRIPSRLTKFSTVRGMSIEFF</original>
    <variation>MHTPSPIPQEYQPQANYSSRHVHFAQSQSRRPFQRDQRNENASIRKRLSRSCDHLSDHNFSPRLPPIRRKPTKHVPSTLSLVIH</variation>
    <location>
        <begin position="91"/>
        <end position="174"/>
    </location>
</feature>
<feature type="splice variant" id="VSP_007800" description="In isoform h." evidence="7">
    <original>HYPSPPITGPHTIARSYTRPPKDRLPTKERFFSISRIPSRLTKFSTVRGMSIEFF</original>
    <variation>MRRYGISPWYSQSTYSLNIIPEEYVPPVDYDIDFR</variation>
    <location>
        <begin position="120"/>
        <end position="174"/>
    </location>
</feature>
<feature type="splice variant" id="VSP_007794" description="In isoform e." evidence="7">
    <original>LTKFSTVRGMSIEFF</original>
    <variation>METFDIRPSKYGSVR</variation>
    <location>
        <begin position="160"/>
        <end position="174"/>
    </location>
</feature>
<feature type="splice variant" id="VSP_007789" description="In isoform b, isoform c, isoform d and isoform h." evidence="6">
    <original>G</original>
    <variation>GFPIVPPANNPSDSSASGRIA</variation>
    <location>
        <position position="248"/>
    </location>
</feature>
<feature type="splice variant" id="VSP_007796" description="In isoform f." evidence="7">
    <original>SRPFRSNPLKRTKSVSKMEKSLAEANQH</original>
    <variation>MQCLSPNREKHNANPRLVRGRIVYKSKR</variation>
    <location>
        <begin position="252"/>
        <end position="279"/>
    </location>
</feature>
<feature type="splice variant" id="VSP_007798" description="In isoform g." evidence="7">
    <original>TLYAKTSSKARTDNVFWGENFEFMMLPKIDEVCVSLFRESDSKKKKDTLIGYVTIGIDQLSSRSPVERW</original>
    <variation>MRGEYDPWDPSFHNSSMIPYSLASIYPSIENLPEEFSNENNKIKNVLKNFIWSFKLKKNYVRVSSLFGE</variation>
    <location>
        <begin position="421"/>
        <end position="489"/>
    </location>
</feature>
<feature type="splice variant" id="VSP_058286" description="In isoform k." evidence="7">
    <location>
        <begin position="1069"/>
        <end position="1070"/>
    </location>
</feature>
<feature type="sequence conflict" description="In Ref. 1; BAA24960." evidence="7" ref="1">
    <original>V</original>
    <variation>C</variation>
    <location>
        <position position="1028"/>
    </location>
</feature>
<sequence>MKVIDEKPEDEEEEKDSGSKCKTPSSCTKKRVREKEEDLPPICHGWLIVCEGNPTKMMNKEVKLPWHAGYCVFEPRQSTMSCYKQEYPFIAGRMLHRNRTVRMDGDRSAFARHWGLLPEHYPSPPITGPHTIARSYTRPPKDRLPTKERFFSISRIPSRLTKFSTVRGMSIEFFDAIHDETNSGGAQVGGESLDRRGWSGASTGNRTTLTASVHNNLMNGRMSSSSHNLSTRLSGSTQNLNQPTNAYGNLLSRPFRSNPLKRTKSVSKMEKSLAEANQHSLHRVDASNTPSRDSSLYAQPPARRHLSQPAREGSLRACRSHESLLSSAHSTHMIELNEDNRLHPVHPSIFEVPNCFRLASTYYSCRTPLERAKWMENLRKTMNPRRDQQRRTENSMLIWILEAKGLPAKRKYYCEMTLDKTLYAKTSSKARTDNVFWGENFEFMMLPKIDEVCVSLFRESDSKKKKDTLIGYVTIGIDQLSSRSPVERWYTVNTSHSDSGTSRIASALGGKSSSQESPSLRIKARWQSVHILPLRAYDNLLETLCYNYLPLCEQLEPVLNVRDKEDLATSLVRVMYKHNLAKEFLCDLIMKEVEKLDNDHLMFRGNTLATKAMESFMKLVADDYLDSTLSDFIKTVLQCEDSCEVDPQKLGNVSNSSLEKNRALLMRYVEVAWTKILNNVHQLPKNLRDVFSALRCRLEAQNREALADTLISSSIFLRFLCPAILSPSLFNLVSEYPSPTNARNLTLIAKTLQNLANFSKFGGKEPHMEFMNEFVDREWHRMKDFLLRISSESKSGPEKNADAIVDAGKELSLIATYLEEAWTPLLQEKNGNKHPLSNVKSVLSELAECKRRSDNGVFHSPMVQQPSSDYENSPQQHVVPRHENVPAYRSTPPTGQATVLGRSTNRPATHLLTSDDYVLSSAFQTPSLRPGGTRLSDETGTSSSRTSDKTTSSAEIRDDTDSDFELREDRGRGGRNRKRLPRTDASPSSSQQASSGYLSNNPSRSSYSNSSSSSPVERMAALSIANPVFGPGPSSGYAIPAEPKEIVYQKRASPPPYDPDVHNYHYQPMQVYAVPPDCQVSPRTQATGGVNAQNRLSLPRTNPRASRNSTLLRPSVVNVPDDWDRTSDYWRDRGENNYRSQLESQVESQAREIERLMRENIELKSKMMSSTKTVDSKRSDSGASEDSYDSLSSLDRPSRQSLVVVPN</sequence>
<reference key="1">
    <citation type="journal article" date="1998" name="Genes Cells">
        <title>Characterization of the C. elegans gap-2 gene encoding a novel Ras-GTPase activating protein and its possible role in larval development.</title>
        <authorList>
            <person name="Hayashizaki S."/>
            <person name="Iino Y."/>
            <person name="Yamamoto M."/>
        </authorList>
    </citation>
    <scope>NUCLEOTIDE SEQUENCE [MRNA] (ISOFORM D)</scope>
    <scope>PARTIAL NUCLEOTIDE SEQUENCE [MRNA] (ISOFORMS A; B; C; E; F AND G)</scope>
    <scope>TISSUE SPECIFICITY</scope>
    <scope>FUNCTION</scope>
    <source>
        <strain>Bristol N2</strain>
    </source>
</reference>
<reference key="2">
    <citation type="journal article" date="1998" name="Science">
        <title>Genome sequence of the nematode C. elegans: a platform for investigating biology.</title>
        <authorList>
            <consortium name="The C. elegans sequencing consortium"/>
        </authorList>
    </citation>
    <scope>NUCLEOTIDE SEQUENCE [LARGE SCALE GENOMIC DNA]</scope>
    <source>
        <strain>Bristol N2</strain>
    </source>
</reference>
<proteinExistence type="evidence at transcript level"/>
<accession>Q8MLZ5</accession>
<accession>A6ZJ45</accession>
<accession>K8ERX6</accession>
<accession>K8ERY0</accession>
<accession>K8ESF6</accession>
<accession>K8ESL7</accession>
<accession>K8F7Z7</accession>
<accession>K8FE04</accession>
<accession>M1ZJ21</accession>
<accession>M1ZMJ4</accession>
<accession>O44239</accession>
<accession>O44240</accession>
<accession>O44241</accession>
<accession>O44242</accession>
<accession>O44243</accession>
<accession>O44244</accession>
<accession>O44245</accession>
<accession>Q3S1K5</accession>
<accession>Q9TVD9</accession>
<accession>Q9TVE0</accession>
<accession>Q9TVE1</accession>
<accession>Q9TVE2</accession>
<accession>Q9TVE3</accession>
<accession>Q9TVE4</accession>
<accession>Q9U991</accession>
<accession>Q9UAH9</accession>
<accession>Q9UAI0</accession>